<evidence type="ECO:0000255" key="1">
    <source>
        <dbReference type="HAMAP-Rule" id="MF_00051"/>
    </source>
</evidence>
<accession>Q1CKB8</accession>
<accession>C4GRH9</accession>
<reference key="1">
    <citation type="journal article" date="2006" name="J. Bacteriol.">
        <title>Complete genome sequence of Yersinia pestis strains Antiqua and Nepal516: evidence of gene reduction in an emerging pathogen.</title>
        <authorList>
            <person name="Chain P.S.G."/>
            <person name="Hu P."/>
            <person name="Malfatti S.A."/>
            <person name="Radnedge L."/>
            <person name="Larimer F."/>
            <person name="Vergez L.M."/>
            <person name="Worsham P."/>
            <person name="Chu M.C."/>
            <person name="Andersen G.L."/>
        </authorList>
    </citation>
    <scope>NUCLEOTIDE SEQUENCE [LARGE SCALE GENOMIC DNA]</scope>
    <source>
        <strain>Nepal516</strain>
    </source>
</reference>
<reference key="2">
    <citation type="submission" date="2009-04" db="EMBL/GenBank/DDBJ databases">
        <title>Yersinia pestis Nepal516A whole genome shotgun sequencing project.</title>
        <authorList>
            <person name="Plunkett G. III"/>
            <person name="Anderson B.D."/>
            <person name="Baumler D.J."/>
            <person name="Burland V."/>
            <person name="Cabot E.L."/>
            <person name="Glasner J.D."/>
            <person name="Mau B."/>
            <person name="Neeno-Eckwall E."/>
            <person name="Perna N.T."/>
            <person name="Munk A.C."/>
            <person name="Tapia R."/>
            <person name="Green L.D."/>
            <person name="Rogers Y.C."/>
            <person name="Detter J.C."/>
            <person name="Bruce D.C."/>
            <person name="Brettin T.S."/>
        </authorList>
    </citation>
    <scope>NUCLEOTIDE SEQUENCE [LARGE SCALE GENOMIC DNA]</scope>
    <source>
        <strain>Nepal516</strain>
    </source>
</reference>
<sequence length="417" mass="45422">MLKREMNIADYDADLWRAMEQEVVRQEEHIELIASENYTSPRVMQAQGSQLTNKYAEGYPGKRYYGGCEYVDVVEQLAIDRAKALFGADYANVQPHSGSQANVAVYSALLKPGDTVLGMNLAHGGHLTHGSPVNFSGKLYNIVPYGIDESGQIDYEDLARQAEIHKPKMIIGGFSAYSGIVDWAKMREIADSIDAWFFVDMAHVAGLVAAGVYPNPVPHAHIVTTTTHKTLAGPRGGLILAKGGDEDLYKKLNSSVFPGNQGGPLMHVIAGKAVALKEAMEPEFKIYQQQVAKNAKAMVAVFLERGYKVVSGGTDNHLFLLDLVDKDITGKDADAALGRANITVNKNSVPNDPKSPFVTSGVRIGSPAITRRGFKEAESRELAGWMCDVLDNINDEATIERVKQKVLAICARLPVYA</sequence>
<feature type="chain" id="PRO_1000006345" description="Serine hydroxymethyltransferase">
    <location>
        <begin position="1"/>
        <end position="417"/>
    </location>
</feature>
<feature type="binding site" evidence="1">
    <location>
        <position position="121"/>
    </location>
    <ligand>
        <name>(6S)-5,6,7,8-tetrahydrofolate</name>
        <dbReference type="ChEBI" id="CHEBI:57453"/>
    </ligand>
</feature>
<feature type="binding site" evidence="1">
    <location>
        <begin position="125"/>
        <end position="127"/>
    </location>
    <ligand>
        <name>(6S)-5,6,7,8-tetrahydrofolate</name>
        <dbReference type="ChEBI" id="CHEBI:57453"/>
    </ligand>
</feature>
<feature type="binding site" evidence="1">
    <location>
        <begin position="355"/>
        <end position="357"/>
    </location>
    <ligand>
        <name>(6S)-5,6,7,8-tetrahydrofolate</name>
        <dbReference type="ChEBI" id="CHEBI:57453"/>
    </ligand>
</feature>
<feature type="site" description="Plays an important role in substrate specificity" evidence="1">
    <location>
        <position position="228"/>
    </location>
</feature>
<feature type="modified residue" description="N6-(pyridoxal phosphate)lysine" evidence="1">
    <location>
        <position position="229"/>
    </location>
</feature>
<proteinExistence type="inferred from homology"/>
<dbReference type="EC" id="2.1.2.1" evidence="1"/>
<dbReference type="EMBL" id="CP000305">
    <property type="protein sequence ID" value="ABG17562.1"/>
    <property type="molecule type" value="Genomic_DNA"/>
</dbReference>
<dbReference type="EMBL" id="ACNQ01000008">
    <property type="protein sequence ID" value="EEO77670.1"/>
    <property type="molecule type" value="Genomic_DNA"/>
</dbReference>
<dbReference type="RefSeq" id="WP_002211552.1">
    <property type="nucleotide sequence ID" value="NZ_ACNQ01000008.1"/>
</dbReference>
<dbReference type="SMR" id="Q1CKB8"/>
<dbReference type="GeneID" id="57975864"/>
<dbReference type="KEGG" id="ypn:YPN_1232"/>
<dbReference type="HOGENOM" id="CLU_022477_2_1_6"/>
<dbReference type="UniPathway" id="UPA00193"/>
<dbReference type="UniPathway" id="UPA00288">
    <property type="reaction ID" value="UER01023"/>
</dbReference>
<dbReference type="Proteomes" id="UP000008936">
    <property type="component" value="Chromosome"/>
</dbReference>
<dbReference type="GO" id="GO:0005829">
    <property type="term" value="C:cytosol"/>
    <property type="evidence" value="ECO:0007669"/>
    <property type="project" value="TreeGrafter"/>
</dbReference>
<dbReference type="GO" id="GO:0004372">
    <property type="term" value="F:glycine hydroxymethyltransferase activity"/>
    <property type="evidence" value="ECO:0007669"/>
    <property type="project" value="UniProtKB-UniRule"/>
</dbReference>
<dbReference type="GO" id="GO:0030170">
    <property type="term" value="F:pyridoxal phosphate binding"/>
    <property type="evidence" value="ECO:0007669"/>
    <property type="project" value="UniProtKB-UniRule"/>
</dbReference>
<dbReference type="GO" id="GO:0019264">
    <property type="term" value="P:glycine biosynthetic process from serine"/>
    <property type="evidence" value="ECO:0007669"/>
    <property type="project" value="UniProtKB-UniRule"/>
</dbReference>
<dbReference type="GO" id="GO:0035999">
    <property type="term" value="P:tetrahydrofolate interconversion"/>
    <property type="evidence" value="ECO:0007669"/>
    <property type="project" value="UniProtKB-UniRule"/>
</dbReference>
<dbReference type="CDD" id="cd00378">
    <property type="entry name" value="SHMT"/>
    <property type="match status" value="1"/>
</dbReference>
<dbReference type="FunFam" id="3.40.640.10:FF:000001">
    <property type="entry name" value="Serine hydroxymethyltransferase"/>
    <property type="match status" value="1"/>
</dbReference>
<dbReference type="FunFam" id="3.90.1150.10:FF:000003">
    <property type="entry name" value="Serine hydroxymethyltransferase"/>
    <property type="match status" value="1"/>
</dbReference>
<dbReference type="Gene3D" id="3.90.1150.10">
    <property type="entry name" value="Aspartate Aminotransferase, domain 1"/>
    <property type="match status" value="1"/>
</dbReference>
<dbReference type="Gene3D" id="3.40.640.10">
    <property type="entry name" value="Type I PLP-dependent aspartate aminotransferase-like (Major domain)"/>
    <property type="match status" value="1"/>
</dbReference>
<dbReference type="HAMAP" id="MF_00051">
    <property type="entry name" value="SHMT"/>
    <property type="match status" value="1"/>
</dbReference>
<dbReference type="InterPro" id="IPR015424">
    <property type="entry name" value="PyrdxlP-dep_Trfase"/>
</dbReference>
<dbReference type="InterPro" id="IPR015421">
    <property type="entry name" value="PyrdxlP-dep_Trfase_major"/>
</dbReference>
<dbReference type="InterPro" id="IPR015422">
    <property type="entry name" value="PyrdxlP-dep_Trfase_small"/>
</dbReference>
<dbReference type="InterPro" id="IPR001085">
    <property type="entry name" value="Ser_HO-MeTrfase"/>
</dbReference>
<dbReference type="InterPro" id="IPR049943">
    <property type="entry name" value="Ser_HO-MeTrfase-like"/>
</dbReference>
<dbReference type="InterPro" id="IPR019798">
    <property type="entry name" value="Ser_HO-MeTrfase_PLP_BS"/>
</dbReference>
<dbReference type="InterPro" id="IPR039429">
    <property type="entry name" value="SHMT-like_dom"/>
</dbReference>
<dbReference type="NCBIfam" id="NF000586">
    <property type="entry name" value="PRK00011.1"/>
    <property type="match status" value="1"/>
</dbReference>
<dbReference type="PANTHER" id="PTHR11680">
    <property type="entry name" value="SERINE HYDROXYMETHYLTRANSFERASE"/>
    <property type="match status" value="1"/>
</dbReference>
<dbReference type="PANTHER" id="PTHR11680:SF50">
    <property type="entry name" value="SERINE HYDROXYMETHYLTRANSFERASE"/>
    <property type="match status" value="1"/>
</dbReference>
<dbReference type="Pfam" id="PF00464">
    <property type="entry name" value="SHMT"/>
    <property type="match status" value="1"/>
</dbReference>
<dbReference type="PIRSF" id="PIRSF000412">
    <property type="entry name" value="SHMT"/>
    <property type="match status" value="1"/>
</dbReference>
<dbReference type="SUPFAM" id="SSF53383">
    <property type="entry name" value="PLP-dependent transferases"/>
    <property type="match status" value="1"/>
</dbReference>
<dbReference type="PROSITE" id="PS00096">
    <property type="entry name" value="SHMT"/>
    <property type="match status" value="1"/>
</dbReference>
<gene>
    <name evidence="1" type="primary">glyA</name>
    <name type="ordered locus">YPN_1232</name>
    <name type="ORF">YP516_1350</name>
</gene>
<keyword id="KW-0028">Amino-acid biosynthesis</keyword>
<keyword id="KW-0963">Cytoplasm</keyword>
<keyword id="KW-0554">One-carbon metabolism</keyword>
<keyword id="KW-0663">Pyridoxal phosphate</keyword>
<keyword id="KW-0808">Transferase</keyword>
<organism>
    <name type="scientific">Yersinia pestis bv. Antiqua (strain Nepal516)</name>
    <dbReference type="NCBI Taxonomy" id="377628"/>
    <lineage>
        <taxon>Bacteria</taxon>
        <taxon>Pseudomonadati</taxon>
        <taxon>Pseudomonadota</taxon>
        <taxon>Gammaproteobacteria</taxon>
        <taxon>Enterobacterales</taxon>
        <taxon>Yersiniaceae</taxon>
        <taxon>Yersinia</taxon>
    </lineage>
</organism>
<protein>
    <recommendedName>
        <fullName evidence="1">Serine hydroxymethyltransferase</fullName>
        <shortName evidence="1">SHMT</shortName>
        <shortName evidence="1">Serine methylase</shortName>
        <ecNumber evidence="1">2.1.2.1</ecNumber>
    </recommendedName>
</protein>
<comment type="function">
    <text evidence="1">Catalyzes the reversible interconversion of serine and glycine with tetrahydrofolate (THF) serving as the one-carbon carrier. This reaction serves as the major source of one-carbon groups required for the biosynthesis of purines, thymidylate, methionine, and other important biomolecules. Also exhibits THF-independent aldolase activity toward beta-hydroxyamino acids, producing glycine and aldehydes, via a retro-aldol mechanism.</text>
</comment>
<comment type="catalytic activity">
    <reaction evidence="1">
        <text>(6R)-5,10-methylene-5,6,7,8-tetrahydrofolate + glycine + H2O = (6S)-5,6,7,8-tetrahydrofolate + L-serine</text>
        <dbReference type="Rhea" id="RHEA:15481"/>
        <dbReference type="ChEBI" id="CHEBI:15377"/>
        <dbReference type="ChEBI" id="CHEBI:15636"/>
        <dbReference type="ChEBI" id="CHEBI:33384"/>
        <dbReference type="ChEBI" id="CHEBI:57305"/>
        <dbReference type="ChEBI" id="CHEBI:57453"/>
        <dbReference type="EC" id="2.1.2.1"/>
    </reaction>
</comment>
<comment type="cofactor">
    <cofactor evidence="1">
        <name>pyridoxal 5'-phosphate</name>
        <dbReference type="ChEBI" id="CHEBI:597326"/>
    </cofactor>
</comment>
<comment type="pathway">
    <text evidence="1">One-carbon metabolism; tetrahydrofolate interconversion.</text>
</comment>
<comment type="pathway">
    <text evidence="1">Amino-acid biosynthesis; glycine biosynthesis; glycine from L-serine: step 1/1.</text>
</comment>
<comment type="subunit">
    <text evidence="1">Homodimer.</text>
</comment>
<comment type="subcellular location">
    <subcellularLocation>
        <location evidence="1">Cytoplasm</location>
    </subcellularLocation>
</comment>
<comment type="similarity">
    <text evidence="1">Belongs to the SHMT family.</text>
</comment>
<name>GLYA_YERPN</name>